<evidence type="ECO:0000250" key="1">
    <source>
        <dbReference type="UniProtKB" id="A0A0H3LKL4"/>
    </source>
</evidence>
<evidence type="ECO:0000255" key="2"/>
<evidence type="ECO:0000269" key="3">
    <source>
    </source>
</evidence>
<evidence type="ECO:0000269" key="4">
    <source>
    </source>
</evidence>
<evidence type="ECO:0000269" key="5">
    <source>
    </source>
</evidence>
<evidence type="ECO:0000303" key="6">
    <source>
    </source>
</evidence>
<evidence type="ECO:0000305" key="7"/>
<evidence type="ECO:0000305" key="8">
    <source>
    </source>
</evidence>
<evidence type="ECO:0007744" key="9">
    <source>
        <dbReference type="PDB" id="5EOW"/>
    </source>
</evidence>
<evidence type="ECO:0007829" key="10">
    <source>
        <dbReference type="PDB" id="5EOW"/>
    </source>
</evidence>
<evidence type="ECO:0007829" key="11">
    <source>
        <dbReference type="PDB" id="8UIQ"/>
    </source>
</evidence>
<evidence type="ECO:0007829" key="12">
    <source>
        <dbReference type="PDB" id="8UIV"/>
    </source>
</evidence>
<proteinExistence type="evidence at protein level"/>
<keyword id="KW-0002">3D-structure</keyword>
<keyword id="KW-0058">Aromatic hydrocarbons catabolism</keyword>
<keyword id="KW-0274">FAD</keyword>
<keyword id="KW-0285">Flavoprotein</keyword>
<keyword id="KW-0503">Monooxygenase</keyword>
<keyword id="KW-0520">NAD</keyword>
<keyword id="KW-0560">Oxidoreductase</keyword>
<keyword id="KW-1185">Reference proteome</keyword>
<keyword id="KW-0732">Signal</keyword>
<sequence length="382" mass="42694">MRGRQKIAIVGAGLGGAAAATLLQQAGFDVEVFEQAPAFTRLGAGIHIGPNVMKIFRRMGLEQKLELMGSHPDFWFSRDGNTGDYLSRIPLGEFARREYGAAYITIHRGDLHALQIEAIQPGTVHFGKRLEKIVDEGDQVRLDFADGTHTVADIVIGADGIHSKIREELLGAEAPIYSGWVAHRALIRGVNLAQHADVFEPCVKWWSEDRHMMVYYTTGKRDEYYFVTGVPHEAWDFQGAFVDSSQEEMRAAFEGYHPTVQKLIDATESITKWPLRNRNPLPLWSRGRLVLLGDACHPMKPHMAQGACMAIEDAAMLTRCLQETGLSDHRTAFALYEANRKERASQVQSVSNANTWLYSQEDPAWVYGYDLYGQQLESGEAA</sequence>
<reference key="1">
    <citation type="journal article" date="2002" name="Environ. Microbiol.">
        <title>Complete genome sequence and comparative analysis of the metabolically versatile Pseudomonas putida KT2440.</title>
        <authorList>
            <person name="Nelson K.E."/>
            <person name="Weinel C."/>
            <person name="Paulsen I.T."/>
            <person name="Dodson R.J."/>
            <person name="Hilbert H."/>
            <person name="Martins dos Santos V.A.P."/>
            <person name="Fouts D.E."/>
            <person name="Gill S.R."/>
            <person name="Pop M."/>
            <person name="Holmes M."/>
            <person name="Brinkac L.M."/>
            <person name="Beanan M.J."/>
            <person name="DeBoy R.T."/>
            <person name="Daugherty S.C."/>
            <person name="Kolonay J.F."/>
            <person name="Madupu R."/>
            <person name="Nelson W.C."/>
            <person name="White O."/>
            <person name="Peterson J.D."/>
            <person name="Khouri H.M."/>
            <person name="Hance I."/>
            <person name="Chris Lee P."/>
            <person name="Holtzapple E.K."/>
            <person name="Scanlan D."/>
            <person name="Tran K."/>
            <person name="Moazzez A."/>
            <person name="Utterback T.R."/>
            <person name="Rizzo M."/>
            <person name="Lee K."/>
            <person name="Kosack D."/>
            <person name="Moestl D."/>
            <person name="Wedler H."/>
            <person name="Lauber J."/>
            <person name="Stjepandic D."/>
            <person name="Hoheisel J."/>
            <person name="Straetz M."/>
            <person name="Heim S."/>
            <person name="Kiewitz C."/>
            <person name="Eisen J.A."/>
            <person name="Timmis K.N."/>
            <person name="Duesterhoeft A."/>
            <person name="Tuemmler B."/>
            <person name="Fraser C.M."/>
        </authorList>
    </citation>
    <scope>NUCLEOTIDE SEQUENCE [LARGE SCALE GENOMIC DNA]</scope>
    <source>
        <strain>ATCC 47054 / DSM 6125 / CFBP 8728 / NCIMB 11950 / KT2440</strain>
    </source>
</reference>
<reference key="2">
    <citation type="journal article" date="2008" name="Proc. Natl. Acad. Sci. U.S.A.">
        <title>Deciphering the genetic determinants for aerobic nicotinic acid degradation: the nic cluster from Pseudomonas putida KT2440.</title>
        <authorList>
            <person name="Jimenez J.I."/>
            <person name="Canales A."/>
            <person name="Jimenez-Barbero J."/>
            <person name="Ginalski K."/>
            <person name="Rychlewski L."/>
            <person name="Garcia J.L."/>
            <person name="Diaz E."/>
        </authorList>
    </citation>
    <scope>FUNCTION</scope>
    <scope>CATALYTIC ACTIVITY</scope>
    <scope>PATHWAY</scope>
    <scope>DISRUPTION PHENOTYPE</scope>
    <source>
        <strain>ATCC 47054 / DSM 6125 / CFBP 8728 / NCIMB 11950 / KT2440</strain>
    </source>
</reference>
<reference key="3">
    <citation type="journal article" date="2011" name="Environ. Microbiol.">
        <title>A finely tuned regulatory circuit of the nicotinic acid degradation pathway in Pseudomonas putida.</title>
        <authorList>
            <person name="Jimenez J.I."/>
            <person name="Juarez J.F."/>
            <person name="Garcia J.L."/>
            <person name="Diaz E."/>
        </authorList>
    </citation>
    <scope>INDUCTION</scope>
    <source>
        <strain>ATCC 47054 / DSM 6125 / CFBP 8728 / NCIMB 11950 / KT2440</strain>
    </source>
</reference>
<reference evidence="9" key="4">
    <citation type="journal article" date="2016" name="Biochemistry">
        <title>Structural and Biochemical Characterization of 6-Hydroxynicotinic Acid 3-Monooxygenase, A Novel Decarboxylative Hydroxylase Involved in Aerobic Nicotinate Degradation.</title>
        <authorList>
            <person name="Hicks K.A."/>
            <person name="Yuen M.E."/>
            <person name="Zhen W.F."/>
            <person name="Gerwig T.J."/>
            <person name="Story R.W."/>
            <person name="Kopp M.C."/>
            <person name="Snider M.J."/>
        </authorList>
    </citation>
    <scope>X-RAY CRYSTALLOGRAPHY (2.10 ANGSTROMS) IN COMPLEX WITH FAD</scope>
    <scope>FUNCTION</scope>
    <scope>CATALYTIC ACTIVITY</scope>
    <scope>BIOPHYSICOCHEMICAL PROPERTIES</scope>
    <scope>COFACTOR</scope>
    <scope>SUBUNIT</scope>
    <scope>PATHWAY</scope>
    <source>
        <strain>ATCC 47054 / DSM 6125 / CFBP 8728 / NCIMB 11950 / KT2440</strain>
    </source>
</reference>
<feature type="signal peptide" evidence="2">
    <location>
        <begin position="1"/>
        <end position="25"/>
    </location>
</feature>
<feature type="chain" id="PRO_0000418466" description="6-hydroxynicotinate 3-monooxygenase">
    <location>
        <begin position="26"/>
        <end position="382"/>
    </location>
</feature>
<feature type="active site" description="Proton acceptor" evidence="1">
    <location>
        <position position="47"/>
    </location>
</feature>
<feature type="active site" description="Proton acceptor" evidence="1">
    <location>
        <position position="215"/>
    </location>
</feature>
<feature type="binding site" evidence="5 9">
    <location>
        <position position="15"/>
    </location>
    <ligand>
        <name>FAD</name>
        <dbReference type="ChEBI" id="CHEBI:57692"/>
    </ligand>
</feature>
<feature type="binding site" evidence="5 9">
    <location>
        <begin position="34"/>
        <end position="35"/>
    </location>
    <ligand>
        <name>FAD</name>
        <dbReference type="ChEBI" id="CHEBI:57692"/>
    </ligand>
</feature>
<feature type="binding site" evidence="5 9">
    <location>
        <position position="47"/>
    </location>
    <ligand>
        <name>FAD</name>
        <dbReference type="ChEBI" id="CHEBI:57692"/>
    </ligand>
</feature>
<feature type="binding site" evidence="5 9">
    <location>
        <position position="108"/>
    </location>
    <ligand>
        <name>FAD</name>
        <dbReference type="ChEBI" id="CHEBI:57692"/>
    </ligand>
</feature>
<feature type="binding site" evidence="5 9">
    <location>
        <position position="130"/>
    </location>
    <ligand>
        <name>FAD</name>
        <dbReference type="ChEBI" id="CHEBI:57692"/>
    </ligand>
</feature>
<feature type="binding site" evidence="5 9">
    <location>
        <position position="294"/>
    </location>
    <ligand>
        <name>FAD</name>
        <dbReference type="ChEBI" id="CHEBI:57692"/>
    </ligand>
</feature>
<feature type="binding site" evidence="5 9">
    <location>
        <begin position="307"/>
        <end position="308"/>
    </location>
    <ligand>
        <name>FAD</name>
        <dbReference type="ChEBI" id="CHEBI:57692"/>
    </ligand>
</feature>
<feature type="strand" evidence="12">
    <location>
        <begin position="6"/>
        <end position="10"/>
    </location>
</feature>
<feature type="helix" evidence="12">
    <location>
        <begin position="14"/>
        <end position="25"/>
    </location>
</feature>
<feature type="strand" evidence="12">
    <location>
        <begin position="29"/>
        <end position="33"/>
    </location>
</feature>
<feature type="strand" evidence="10">
    <location>
        <begin position="36"/>
        <end position="38"/>
    </location>
</feature>
<feature type="strand" evidence="12">
    <location>
        <begin position="45"/>
        <end position="48"/>
    </location>
</feature>
<feature type="helix" evidence="12">
    <location>
        <begin position="50"/>
        <end position="58"/>
    </location>
</feature>
<feature type="helix" evidence="12">
    <location>
        <begin position="62"/>
        <end position="68"/>
    </location>
</feature>
<feature type="strand" evidence="12">
    <location>
        <begin position="73"/>
        <end position="79"/>
    </location>
</feature>
<feature type="turn" evidence="12">
    <location>
        <begin position="80"/>
        <end position="82"/>
    </location>
</feature>
<feature type="strand" evidence="12">
    <location>
        <begin position="85"/>
        <end position="90"/>
    </location>
</feature>
<feature type="helix" evidence="12">
    <location>
        <begin position="92"/>
        <end position="99"/>
    </location>
</feature>
<feature type="strand" evidence="12">
    <location>
        <begin position="104"/>
        <end position="107"/>
    </location>
</feature>
<feature type="helix" evidence="12">
    <location>
        <begin position="108"/>
        <end position="117"/>
    </location>
</feature>
<feature type="strand" evidence="12">
    <location>
        <begin position="124"/>
        <end position="127"/>
    </location>
</feature>
<feature type="strand" evidence="12">
    <location>
        <begin position="130"/>
        <end position="135"/>
    </location>
</feature>
<feature type="strand" evidence="12">
    <location>
        <begin position="137"/>
        <end position="144"/>
    </location>
</feature>
<feature type="strand" evidence="12">
    <location>
        <begin position="149"/>
        <end position="157"/>
    </location>
</feature>
<feature type="helix" evidence="12">
    <location>
        <begin position="164"/>
        <end position="170"/>
    </location>
</feature>
<feature type="strand" evidence="12">
    <location>
        <begin position="180"/>
        <end position="187"/>
    </location>
</feature>
<feature type="helix" evidence="12">
    <location>
        <begin position="190"/>
        <end position="194"/>
    </location>
</feature>
<feature type="helix" evidence="12">
    <location>
        <begin position="195"/>
        <end position="198"/>
    </location>
</feature>
<feature type="strand" evidence="12">
    <location>
        <begin position="201"/>
        <end position="206"/>
    </location>
</feature>
<feature type="strand" evidence="12">
    <location>
        <begin position="211"/>
        <end position="218"/>
    </location>
</feature>
<feature type="strand" evidence="12">
    <location>
        <begin position="224"/>
        <end position="231"/>
    </location>
</feature>
<feature type="strand" evidence="12">
    <location>
        <begin position="238"/>
        <end position="240"/>
    </location>
</feature>
<feature type="helix" evidence="12">
    <location>
        <begin position="246"/>
        <end position="252"/>
    </location>
</feature>
<feature type="turn" evidence="12">
    <location>
        <begin position="253"/>
        <end position="255"/>
    </location>
</feature>
<feature type="helix" evidence="12">
    <location>
        <begin position="258"/>
        <end position="266"/>
    </location>
</feature>
<feature type="strand" evidence="12">
    <location>
        <begin position="271"/>
        <end position="275"/>
    </location>
</feature>
<feature type="strand" evidence="12">
    <location>
        <begin position="289"/>
        <end position="291"/>
    </location>
</feature>
<feature type="helix" evidence="12">
    <location>
        <begin position="293"/>
        <end position="296"/>
    </location>
</feature>
<feature type="helix" evidence="11">
    <location>
        <begin position="301"/>
        <end position="303"/>
    </location>
</feature>
<feature type="helix" evidence="12">
    <location>
        <begin position="306"/>
        <end position="324"/>
    </location>
</feature>
<feature type="helix" evidence="12">
    <location>
        <begin position="326"/>
        <end position="328"/>
    </location>
</feature>
<feature type="helix" evidence="12">
    <location>
        <begin position="329"/>
        <end position="353"/>
    </location>
</feature>
<feature type="turn" evidence="12">
    <location>
        <begin position="356"/>
        <end position="358"/>
    </location>
</feature>
<feature type="helix" evidence="12">
    <location>
        <begin position="364"/>
        <end position="367"/>
    </location>
</feature>
<feature type="turn" evidence="12">
    <location>
        <begin position="371"/>
        <end position="373"/>
    </location>
</feature>
<organism>
    <name type="scientific">Pseudomonas putida (strain ATCC 47054 / DSM 6125 / CFBP 8728 / NCIMB 11950 / KT2440)</name>
    <dbReference type="NCBI Taxonomy" id="160488"/>
    <lineage>
        <taxon>Bacteria</taxon>
        <taxon>Pseudomonadati</taxon>
        <taxon>Pseudomonadota</taxon>
        <taxon>Gammaproteobacteria</taxon>
        <taxon>Pseudomonadales</taxon>
        <taxon>Pseudomonadaceae</taxon>
        <taxon>Pseudomonas</taxon>
    </lineage>
</organism>
<comment type="function">
    <text evidence="3 5">Flavin-dependent monooxygenase (FMO) that catalyzes the decarboxylative hydroxylation of 6-hydroxynicotinic acid (6-HNA) to 2,5-dihydroxypyridine (2,5-DHP) with concomitant oxidation of NADH, a step in the aerobic nicotinate degradation pathway.</text>
</comment>
<comment type="catalytic activity">
    <reaction evidence="3 5">
        <text>6-hydroxynicotinate + NADH + O2 + 2 H(+) = 2,5-dihydroxypyridine + CO2 + NAD(+) + H2O</text>
        <dbReference type="Rhea" id="RHEA:27333"/>
        <dbReference type="ChEBI" id="CHEBI:15377"/>
        <dbReference type="ChEBI" id="CHEBI:15378"/>
        <dbReference type="ChEBI" id="CHEBI:15379"/>
        <dbReference type="ChEBI" id="CHEBI:16364"/>
        <dbReference type="ChEBI" id="CHEBI:16526"/>
        <dbReference type="ChEBI" id="CHEBI:57540"/>
        <dbReference type="ChEBI" id="CHEBI:57664"/>
        <dbReference type="ChEBI" id="CHEBI:57945"/>
        <dbReference type="EC" id="1.14.13.114"/>
    </reaction>
</comment>
<comment type="cofactor">
    <cofactor evidence="5">
        <name>FAD</name>
        <dbReference type="ChEBI" id="CHEBI:57692"/>
    </cofactor>
    <text evidence="5">Binds 1 FAD molecule per subunit.</text>
</comment>
<comment type="biophysicochemical properties">
    <kinetics>
        <KM evidence="5">97 uM for 6-hydroxynicotinate (at pH 7.5 and 25 degrees Celsius)</KM>
        <KM evidence="5">3 uM for NADH (at pH 7.5 and 25 degrees Celsius)</KM>
        <text evidence="5">kcat is 2.2 sec(-1) with 6-hydroxynicotinate as substrate (at pH 7.5 and 25 degrees Celsius).</text>
    </kinetics>
</comment>
<comment type="pathway">
    <text evidence="3 8">Cofactor degradation; nicotinate degradation.</text>
</comment>
<comment type="subunit">
    <text evidence="5">Monomer.</text>
</comment>
<comment type="induction">
    <text evidence="4">Repressed by NicR in the absence of 6-hydroxynicotinate (6HNA) inducer. In presence of 6HNA, repression is alleviated.</text>
</comment>
<comment type="disruption phenotype">
    <text evidence="3">Cells show a complete conversion of nicotinate to 6-hydroxynicotinate.</text>
</comment>
<comment type="similarity">
    <text evidence="7">Belongs to the 6-hydroxynicotinate 3-monooxygenase family.</text>
</comment>
<gene>
    <name evidence="6" type="primary">nicC</name>
    <name type="ordered locus">PP_3944</name>
</gene>
<accession>Q88FY2</accession>
<protein>
    <recommendedName>
        <fullName evidence="6">6-hydroxynicotinate 3-monooxygenase</fullName>
        <shortName evidence="6">6-HNA monooxygenase</shortName>
        <ecNumber evidence="3 5">1.14.13.114</ecNumber>
    </recommendedName>
    <alternativeName>
        <fullName>Nicotinate degradation protein C</fullName>
    </alternativeName>
</protein>
<dbReference type="EC" id="1.14.13.114" evidence="3 5"/>
<dbReference type="EMBL" id="AE015451">
    <property type="protein sequence ID" value="AAN69538.1"/>
    <property type="molecule type" value="Genomic_DNA"/>
</dbReference>
<dbReference type="RefSeq" id="NP_746074.1">
    <property type="nucleotide sequence ID" value="NC_002947.4"/>
</dbReference>
<dbReference type="RefSeq" id="WP_010954763.1">
    <property type="nucleotide sequence ID" value="NZ_CP169744.1"/>
</dbReference>
<dbReference type="PDB" id="5EOW">
    <property type="method" value="X-ray"/>
    <property type="resolution" value="2.10 A"/>
    <property type="chains" value="A=1-382"/>
</dbReference>
<dbReference type="PDB" id="8UIQ">
    <property type="method" value="X-ray"/>
    <property type="resolution" value="2.17 A"/>
    <property type="chains" value="A=1-382"/>
</dbReference>
<dbReference type="PDB" id="8UIV">
    <property type="method" value="X-ray"/>
    <property type="resolution" value="1.51 A"/>
    <property type="chains" value="A=1-382"/>
</dbReference>
<dbReference type="PDBsum" id="5EOW"/>
<dbReference type="PDBsum" id="8UIQ"/>
<dbReference type="PDBsum" id="8UIV"/>
<dbReference type="SMR" id="Q88FY2"/>
<dbReference type="STRING" id="160488.PP_3944"/>
<dbReference type="PaxDb" id="160488-PP_3944"/>
<dbReference type="GeneID" id="83679438"/>
<dbReference type="KEGG" id="ppu:PP_3944"/>
<dbReference type="PATRIC" id="fig|160488.4.peg.4199"/>
<dbReference type="eggNOG" id="COG0654">
    <property type="taxonomic scope" value="Bacteria"/>
</dbReference>
<dbReference type="HOGENOM" id="CLU_009665_19_5_6"/>
<dbReference type="OrthoDB" id="9782160at2"/>
<dbReference type="PhylomeDB" id="Q88FY2"/>
<dbReference type="BioCyc" id="MetaCyc:G1G01-4209-MONOMER"/>
<dbReference type="BioCyc" id="PPUT160488:G1G01-4209-MONOMER"/>
<dbReference type="BRENDA" id="1.14.13.114">
    <property type="organism ID" value="5092"/>
</dbReference>
<dbReference type="UniPathway" id="UPA01010"/>
<dbReference type="Proteomes" id="UP000000556">
    <property type="component" value="Chromosome"/>
</dbReference>
<dbReference type="GO" id="GO:0043731">
    <property type="term" value="F:6-hydroxynicotinate 3-monooxygenase activity"/>
    <property type="evidence" value="ECO:0007669"/>
    <property type="project" value="UniProtKB-EC"/>
</dbReference>
<dbReference type="GO" id="GO:0071949">
    <property type="term" value="F:FAD binding"/>
    <property type="evidence" value="ECO:0007669"/>
    <property type="project" value="InterPro"/>
</dbReference>
<dbReference type="GO" id="GO:0004497">
    <property type="term" value="F:monooxygenase activity"/>
    <property type="evidence" value="ECO:0000314"/>
    <property type="project" value="UniProtKB"/>
</dbReference>
<dbReference type="GO" id="GO:1901848">
    <property type="term" value="P:nicotinate catabolic process"/>
    <property type="evidence" value="ECO:0000314"/>
    <property type="project" value="UniProtKB"/>
</dbReference>
<dbReference type="FunFam" id="3.50.50.60:FF:000223">
    <property type="entry name" value="6-hydroxynicotinate 3-monooxygenase"/>
    <property type="match status" value="1"/>
</dbReference>
<dbReference type="Gene3D" id="3.50.50.60">
    <property type="entry name" value="FAD/NAD(P)-binding domain"/>
    <property type="match status" value="1"/>
</dbReference>
<dbReference type="InterPro" id="IPR002938">
    <property type="entry name" value="FAD-bd"/>
</dbReference>
<dbReference type="InterPro" id="IPR050493">
    <property type="entry name" value="FAD-dep_Monooxygenase_BioMet"/>
</dbReference>
<dbReference type="InterPro" id="IPR036188">
    <property type="entry name" value="FAD/NAD-bd_sf"/>
</dbReference>
<dbReference type="PANTHER" id="PTHR13789">
    <property type="entry name" value="MONOOXYGENASE"/>
    <property type="match status" value="1"/>
</dbReference>
<dbReference type="PANTHER" id="PTHR13789:SF309">
    <property type="entry name" value="PUTATIVE (AFU_ORTHOLOGUE AFUA_6G14510)-RELATED"/>
    <property type="match status" value="1"/>
</dbReference>
<dbReference type="Pfam" id="PF01494">
    <property type="entry name" value="FAD_binding_3"/>
    <property type="match status" value="1"/>
</dbReference>
<dbReference type="PRINTS" id="PR00420">
    <property type="entry name" value="RNGMNOXGNASE"/>
</dbReference>
<dbReference type="SUPFAM" id="SSF54373">
    <property type="entry name" value="FAD-linked reductases, C-terminal domain"/>
    <property type="match status" value="1"/>
</dbReference>
<dbReference type="SUPFAM" id="SSF51905">
    <property type="entry name" value="FAD/NAD(P)-binding domain"/>
    <property type="match status" value="1"/>
</dbReference>
<name>6HN3M_PSEPK</name>